<keyword id="KW-0456">Lyase</keyword>
<keyword id="KW-0501">Molybdenum cofactor biosynthesis</keyword>
<keyword id="KW-1185">Reference proteome</keyword>
<sequence length="157" mass="16952">MNFTHINEQGYARMVDVSSKNDSERIAIAQAIVKMQPETMGKIRDGAIKKGDVLGVAQIAGIMGAKQTSALIPMCHPLNLTSVNLEFAFDEVNASIIIEAEVKTTGKTGVEMEAITAVSVAALTIYDMSKAVDRWMEITDIKLLEKSGGKSGHLVRD</sequence>
<evidence type="ECO:0000255" key="1">
    <source>
        <dbReference type="HAMAP-Rule" id="MF_01224"/>
    </source>
</evidence>
<gene>
    <name evidence="1" type="primary">moaC</name>
    <name type="ordered locus">Swol_1859</name>
</gene>
<proteinExistence type="inferred from homology"/>
<dbReference type="EC" id="4.6.1.17" evidence="1"/>
<dbReference type="EMBL" id="CP000448">
    <property type="protein sequence ID" value="ABI69157.1"/>
    <property type="molecule type" value="Genomic_DNA"/>
</dbReference>
<dbReference type="RefSeq" id="WP_011641252.1">
    <property type="nucleotide sequence ID" value="NC_008346.1"/>
</dbReference>
<dbReference type="SMR" id="Q0AVU7"/>
<dbReference type="STRING" id="335541.Swol_1859"/>
<dbReference type="KEGG" id="swo:Swol_1859"/>
<dbReference type="eggNOG" id="COG0315">
    <property type="taxonomic scope" value="Bacteria"/>
</dbReference>
<dbReference type="HOGENOM" id="CLU_074693_1_1_9"/>
<dbReference type="OrthoDB" id="9794429at2"/>
<dbReference type="UniPathway" id="UPA00344"/>
<dbReference type="Proteomes" id="UP000001968">
    <property type="component" value="Chromosome"/>
</dbReference>
<dbReference type="GO" id="GO:0061799">
    <property type="term" value="F:cyclic pyranopterin monophosphate synthase activity"/>
    <property type="evidence" value="ECO:0007669"/>
    <property type="project" value="UniProtKB-UniRule"/>
</dbReference>
<dbReference type="GO" id="GO:0006777">
    <property type="term" value="P:Mo-molybdopterin cofactor biosynthetic process"/>
    <property type="evidence" value="ECO:0007669"/>
    <property type="project" value="UniProtKB-UniRule"/>
</dbReference>
<dbReference type="CDD" id="cd01420">
    <property type="entry name" value="MoaC_PE"/>
    <property type="match status" value="1"/>
</dbReference>
<dbReference type="Gene3D" id="3.30.70.640">
    <property type="entry name" value="Molybdopterin cofactor biosynthesis C (MoaC) domain"/>
    <property type="match status" value="1"/>
</dbReference>
<dbReference type="HAMAP" id="MF_01224_B">
    <property type="entry name" value="MoaC_B"/>
    <property type="match status" value="1"/>
</dbReference>
<dbReference type="InterPro" id="IPR023045">
    <property type="entry name" value="MoaC"/>
</dbReference>
<dbReference type="InterPro" id="IPR047594">
    <property type="entry name" value="MoaC_bact/euk"/>
</dbReference>
<dbReference type="InterPro" id="IPR036522">
    <property type="entry name" value="MoaC_sf"/>
</dbReference>
<dbReference type="InterPro" id="IPR050105">
    <property type="entry name" value="MoCo_biosynth_MoaA/MoaC"/>
</dbReference>
<dbReference type="InterPro" id="IPR002820">
    <property type="entry name" value="Mopterin_CF_biosynth-C_dom"/>
</dbReference>
<dbReference type="NCBIfam" id="TIGR00581">
    <property type="entry name" value="moaC"/>
    <property type="match status" value="1"/>
</dbReference>
<dbReference type="NCBIfam" id="NF006870">
    <property type="entry name" value="PRK09364.1"/>
    <property type="match status" value="1"/>
</dbReference>
<dbReference type="PANTHER" id="PTHR22960:SF29">
    <property type="entry name" value="CYCLIC PYRANOPTERIN MONOPHOSPHATE SYNTHASE"/>
    <property type="match status" value="1"/>
</dbReference>
<dbReference type="PANTHER" id="PTHR22960">
    <property type="entry name" value="MOLYBDOPTERIN COFACTOR SYNTHESIS PROTEIN A"/>
    <property type="match status" value="1"/>
</dbReference>
<dbReference type="Pfam" id="PF01967">
    <property type="entry name" value="MoaC"/>
    <property type="match status" value="1"/>
</dbReference>
<dbReference type="SUPFAM" id="SSF55040">
    <property type="entry name" value="Molybdenum cofactor biosynthesis protein C, MoaC"/>
    <property type="match status" value="1"/>
</dbReference>
<accession>Q0AVU7</accession>
<organism>
    <name type="scientific">Syntrophomonas wolfei subsp. wolfei (strain DSM 2245B / Goettingen)</name>
    <dbReference type="NCBI Taxonomy" id="335541"/>
    <lineage>
        <taxon>Bacteria</taxon>
        <taxon>Bacillati</taxon>
        <taxon>Bacillota</taxon>
        <taxon>Clostridia</taxon>
        <taxon>Eubacteriales</taxon>
        <taxon>Syntrophomonadaceae</taxon>
        <taxon>Syntrophomonas</taxon>
    </lineage>
</organism>
<comment type="function">
    <text evidence="1">Catalyzes the conversion of (8S)-3',8-cyclo-7,8-dihydroguanosine 5'-triphosphate to cyclic pyranopterin monophosphate (cPMP).</text>
</comment>
<comment type="catalytic activity">
    <reaction evidence="1">
        <text>(8S)-3',8-cyclo-7,8-dihydroguanosine 5'-triphosphate = cyclic pyranopterin phosphate + diphosphate</text>
        <dbReference type="Rhea" id="RHEA:49580"/>
        <dbReference type="ChEBI" id="CHEBI:33019"/>
        <dbReference type="ChEBI" id="CHEBI:59648"/>
        <dbReference type="ChEBI" id="CHEBI:131766"/>
        <dbReference type="EC" id="4.6.1.17"/>
    </reaction>
</comment>
<comment type="pathway">
    <text evidence="1">Cofactor biosynthesis; molybdopterin biosynthesis.</text>
</comment>
<comment type="subunit">
    <text evidence="1">Homohexamer; trimer of dimers.</text>
</comment>
<comment type="similarity">
    <text evidence="1">Belongs to the MoaC family.</text>
</comment>
<reference key="1">
    <citation type="journal article" date="2010" name="Environ. Microbiol.">
        <title>The genome of Syntrophomonas wolfei: new insights into syntrophic metabolism and biohydrogen production.</title>
        <authorList>
            <person name="Sieber J.R."/>
            <person name="Sims D.R."/>
            <person name="Han C."/>
            <person name="Kim E."/>
            <person name="Lykidis A."/>
            <person name="Lapidus A.L."/>
            <person name="McDonnald E."/>
            <person name="Rohlin L."/>
            <person name="Culley D.E."/>
            <person name="Gunsalus R."/>
            <person name="McInerney M.J."/>
        </authorList>
    </citation>
    <scope>NUCLEOTIDE SEQUENCE [LARGE SCALE GENOMIC DNA]</scope>
    <source>
        <strain>DSM 2245B / Goettingen</strain>
    </source>
</reference>
<protein>
    <recommendedName>
        <fullName evidence="1">Cyclic pyranopterin monophosphate synthase</fullName>
        <ecNumber evidence="1">4.6.1.17</ecNumber>
    </recommendedName>
    <alternativeName>
        <fullName evidence="1">Molybdenum cofactor biosynthesis protein C</fullName>
    </alternativeName>
</protein>
<name>MOAC_SYNWW</name>
<feature type="chain" id="PRO_1000054155" description="Cyclic pyranopterin monophosphate synthase">
    <location>
        <begin position="1"/>
        <end position="157"/>
    </location>
</feature>
<feature type="active site" evidence="1">
    <location>
        <position position="127"/>
    </location>
</feature>
<feature type="binding site" evidence="1">
    <location>
        <begin position="74"/>
        <end position="76"/>
    </location>
    <ligand>
        <name>substrate</name>
    </ligand>
</feature>
<feature type="binding site" evidence="1">
    <location>
        <begin position="112"/>
        <end position="113"/>
    </location>
    <ligand>
        <name>substrate</name>
    </ligand>
</feature>